<name>RS8_THEAC</name>
<dbReference type="EMBL" id="AL445067">
    <property type="protein sequence ID" value="CAC12380.1"/>
    <property type="molecule type" value="Genomic_DNA"/>
</dbReference>
<dbReference type="RefSeq" id="WP_010901663.1">
    <property type="nucleotide sequence ID" value="NC_002578.1"/>
</dbReference>
<dbReference type="SMR" id="Q9HIS2"/>
<dbReference type="FunCoup" id="Q9HIS2">
    <property type="interactions" value="156"/>
</dbReference>
<dbReference type="STRING" id="273075.gene:9572479"/>
<dbReference type="PaxDb" id="273075-Ta1256"/>
<dbReference type="EnsemblBacteria" id="CAC12380">
    <property type="protein sequence ID" value="CAC12380"/>
    <property type="gene ID" value="CAC12380"/>
</dbReference>
<dbReference type="KEGG" id="tac:Ta1256"/>
<dbReference type="eggNOG" id="arCOG04091">
    <property type="taxonomic scope" value="Archaea"/>
</dbReference>
<dbReference type="HOGENOM" id="CLU_098428_1_1_2"/>
<dbReference type="InParanoid" id="Q9HIS2"/>
<dbReference type="OrthoDB" id="5670at2157"/>
<dbReference type="Proteomes" id="UP000001024">
    <property type="component" value="Chromosome"/>
</dbReference>
<dbReference type="GO" id="GO:1990904">
    <property type="term" value="C:ribonucleoprotein complex"/>
    <property type="evidence" value="ECO:0007669"/>
    <property type="project" value="UniProtKB-KW"/>
</dbReference>
<dbReference type="GO" id="GO:0005840">
    <property type="term" value="C:ribosome"/>
    <property type="evidence" value="ECO:0007669"/>
    <property type="project" value="UniProtKB-KW"/>
</dbReference>
<dbReference type="GO" id="GO:0019843">
    <property type="term" value="F:rRNA binding"/>
    <property type="evidence" value="ECO:0007669"/>
    <property type="project" value="UniProtKB-UniRule"/>
</dbReference>
<dbReference type="GO" id="GO:0003735">
    <property type="term" value="F:structural constituent of ribosome"/>
    <property type="evidence" value="ECO:0007669"/>
    <property type="project" value="InterPro"/>
</dbReference>
<dbReference type="GO" id="GO:0006412">
    <property type="term" value="P:translation"/>
    <property type="evidence" value="ECO:0007669"/>
    <property type="project" value="UniProtKB-UniRule"/>
</dbReference>
<dbReference type="FunFam" id="3.30.1490.10:FF:000002">
    <property type="entry name" value="40S ribosomal protein S15a"/>
    <property type="match status" value="1"/>
</dbReference>
<dbReference type="Gene3D" id="3.30.1370.30">
    <property type="match status" value="1"/>
</dbReference>
<dbReference type="Gene3D" id="3.30.1490.10">
    <property type="match status" value="1"/>
</dbReference>
<dbReference type="HAMAP" id="MF_01302_A">
    <property type="entry name" value="Ribosomal_uS8_A"/>
    <property type="match status" value="1"/>
</dbReference>
<dbReference type="InterPro" id="IPR000630">
    <property type="entry name" value="Ribosomal_uS8"/>
</dbReference>
<dbReference type="InterPro" id="IPR047863">
    <property type="entry name" value="Ribosomal_uS8_CS"/>
</dbReference>
<dbReference type="InterPro" id="IPR035987">
    <property type="entry name" value="Ribosomal_uS8_sf"/>
</dbReference>
<dbReference type="NCBIfam" id="NF003115">
    <property type="entry name" value="PRK04034.1"/>
    <property type="match status" value="1"/>
</dbReference>
<dbReference type="PANTHER" id="PTHR11758">
    <property type="entry name" value="40S RIBOSOMAL PROTEIN S15A"/>
    <property type="match status" value="1"/>
</dbReference>
<dbReference type="Pfam" id="PF00410">
    <property type="entry name" value="Ribosomal_S8"/>
    <property type="match status" value="1"/>
</dbReference>
<dbReference type="SUPFAM" id="SSF56047">
    <property type="entry name" value="Ribosomal protein S8"/>
    <property type="match status" value="1"/>
</dbReference>
<dbReference type="PROSITE" id="PS00053">
    <property type="entry name" value="RIBOSOMAL_S8"/>
    <property type="match status" value="1"/>
</dbReference>
<gene>
    <name evidence="1" type="primary">rps8</name>
    <name type="ordered locus">Ta1256</name>
</gene>
<protein>
    <recommendedName>
        <fullName evidence="1">Small ribosomal subunit protein uS8</fullName>
    </recommendedName>
    <alternativeName>
        <fullName evidence="2">30S ribosomal protein S8</fullName>
    </alternativeName>
</protein>
<accession>Q9HIS2</accession>
<evidence type="ECO:0000255" key="1">
    <source>
        <dbReference type="HAMAP-Rule" id="MF_01302"/>
    </source>
</evidence>
<evidence type="ECO:0000305" key="2"/>
<organism>
    <name type="scientific">Thermoplasma acidophilum (strain ATCC 25905 / DSM 1728 / JCM 9062 / NBRC 15155 / AMRC-C165)</name>
    <dbReference type="NCBI Taxonomy" id="273075"/>
    <lineage>
        <taxon>Archaea</taxon>
        <taxon>Methanobacteriati</taxon>
        <taxon>Thermoplasmatota</taxon>
        <taxon>Thermoplasmata</taxon>
        <taxon>Thermoplasmatales</taxon>
        <taxon>Thermoplasmataceae</taxon>
        <taxon>Thermoplasma</taxon>
    </lineage>
</organism>
<keyword id="KW-1185">Reference proteome</keyword>
<keyword id="KW-0687">Ribonucleoprotein</keyword>
<keyword id="KW-0689">Ribosomal protein</keyword>
<keyword id="KW-0694">RNA-binding</keyword>
<keyword id="KW-0699">rRNA-binding</keyword>
<proteinExistence type="inferred from homology"/>
<sequence>MKNDTLNDVINSIKNASRLGKREIIAEPAAKLIGKVLKVMQDYNYIKSFEVIDESRGGKFKIVLNTTINNCGVIKPRFPVKNENLEKYEARYLPAEDFGILILTTTKGVMSNIEARKLGIGGKLLAYVY</sequence>
<comment type="function">
    <text evidence="1">One of the primary rRNA binding proteins, it binds directly to 16S rRNA central domain where it helps coordinate assembly of the platform of the 30S subunit.</text>
</comment>
<comment type="subunit">
    <text evidence="1">Part of the 30S ribosomal subunit.</text>
</comment>
<comment type="similarity">
    <text evidence="1">Belongs to the universal ribosomal protein uS8 family.</text>
</comment>
<reference key="1">
    <citation type="journal article" date="2000" name="Nature">
        <title>The genome sequence of the thermoacidophilic scavenger Thermoplasma acidophilum.</title>
        <authorList>
            <person name="Ruepp A."/>
            <person name="Graml W."/>
            <person name="Santos-Martinez M.-L."/>
            <person name="Koretke K.K."/>
            <person name="Volker C."/>
            <person name="Mewes H.-W."/>
            <person name="Frishman D."/>
            <person name="Stocker S."/>
            <person name="Lupas A.N."/>
            <person name="Baumeister W."/>
        </authorList>
    </citation>
    <scope>NUCLEOTIDE SEQUENCE [LARGE SCALE GENOMIC DNA]</scope>
    <source>
        <strain>ATCC 25905 / DSM 1728 / JCM 9062 / NBRC 15155 / AMRC-C165</strain>
    </source>
</reference>
<feature type="chain" id="PRO_0000126555" description="Small ribosomal subunit protein uS8">
    <location>
        <begin position="1"/>
        <end position="129"/>
    </location>
</feature>